<proteinExistence type="inferred from homology"/>
<evidence type="ECO:0000255" key="1">
    <source>
        <dbReference type="HAMAP-Rule" id="MF_01875"/>
    </source>
</evidence>
<evidence type="ECO:0000256" key="2">
    <source>
        <dbReference type="SAM" id="MobiDB-lite"/>
    </source>
</evidence>
<name>KU_SYMTH</name>
<gene>
    <name evidence="1" type="primary">ku</name>
    <name type="ordered locus">STH1798</name>
</gene>
<organism>
    <name type="scientific">Symbiobacterium thermophilum (strain DSM 24528 / JCM 14929 / IAM 14863 / T)</name>
    <dbReference type="NCBI Taxonomy" id="292459"/>
    <lineage>
        <taxon>Bacteria</taxon>
        <taxon>Bacillati</taxon>
        <taxon>Bacillota</taxon>
        <taxon>Clostridia</taxon>
        <taxon>Eubacteriales</taxon>
        <taxon>Symbiobacteriaceae</taxon>
        <taxon>Symbiobacterium</taxon>
    </lineage>
</organism>
<feature type="chain" id="PRO_0000389201" description="Non-homologous end joining protein Ku">
    <location>
        <begin position="1"/>
        <end position="402"/>
    </location>
</feature>
<feature type="domain" description="Ku" evidence="1">
    <location>
        <begin position="12"/>
        <end position="185"/>
    </location>
</feature>
<feature type="region of interest" description="Disordered" evidence="2">
    <location>
        <begin position="261"/>
        <end position="402"/>
    </location>
</feature>
<feature type="compositionally biased region" description="Low complexity" evidence="2">
    <location>
        <begin position="299"/>
        <end position="308"/>
    </location>
</feature>
<feature type="compositionally biased region" description="Low complexity" evidence="2">
    <location>
        <begin position="332"/>
        <end position="343"/>
    </location>
</feature>
<feature type="compositionally biased region" description="Pro residues" evidence="2">
    <location>
        <begin position="344"/>
        <end position="358"/>
    </location>
</feature>
<feature type="compositionally biased region" description="Low complexity" evidence="2">
    <location>
        <begin position="359"/>
        <end position="376"/>
    </location>
</feature>
<sequence>MDALRAMWKGTISFGLVTIPVKLYAATESKDLRFNLLHEPCQTPVQYRKYCPTCEREVESGEIVKGYEFDRGRYVTLRDEDFESIPLAARRTLEIVAFVRLEEIDPIYFDKTYYLEPGEGGAKAYGLLRHAMEVTGRVAIARVVLRAKESLAALRVFREGVLAMETMHFPDEVRPVAALTGIAQPELRPQEIEMATGLIESLTMPFSPERFENTYREALLELIQAKIAGAPPAEPGPAPEQGRVVDLMEALRASIRAAEAQRAAGGATGGAAGADGTPPAPVARSPEAPARRAIPGLPGDPAASVPGVPAAPVPRAPGVTGAPTPGTPPAAVPGVPATAVPGTPGAPVPTAPGVPSAPAPGTSPTSVPGVQTAPNGAAPPGPFAGSDRAAEVGPDETAPGGP</sequence>
<reference key="1">
    <citation type="journal article" date="2004" name="Nucleic Acids Res.">
        <title>Genome sequence of Symbiobacterium thermophilum, an uncultivable bacterium that depends on microbial commensalism.</title>
        <authorList>
            <person name="Ueda K."/>
            <person name="Yamashita A."/>
            <person name="Ishikawa J."/>
            <person name="Shimada M."/>
            <person name="Watsuji T."/>
            <person name="Morimura K."/>
            <person name="Ikeda H."/>
            <person name="Hattori M."/>
            <person name="Beppu T."/>
        </authorList>
    </citation>
    <scope>NUCLEOTIDE SEQUENCE [LARGE SCALE GENOMIC DNA]</scope>
    <source>
        <strain>DSM 24528 / JCM 14929 / IAM 14863 / T</strain>
    </source>
</reference>
<comment type="function">
    <text evidence="1">With LigD forms a non-homologous end joining (NHEJ) DNA repair enzyme, which repairs dsDNA breaks with reduced fidelity. Binds linear dsDNA with 5'- and 3'- overhangs but not closed circular dsDNA nor ssDNA. Recruits and stimulates the ligase activity of LigD.</text>
</comment>
<comment type="subunit">
    <text evidence="1">Homodimer. Interacts with LigD.</text>
</comment>
<comment type="similarity">
    <text evidence="1">Belongs to the prokaryotic Ku family.</text>
</comment>
<keyword id="KW-0227">DNA damage</keyword>
<keyword id="KW-0233">DNA recombination</keyword>
<keyword id="KW-0234">DNA repair</keyword>
<keyword id="KW-0238">DNA-binding</keyword>
<keyword id="KW-1185">Reference proteome</keyword>
<accession>Q67NG0</accession>
<protein>
    <recommendedName>
        <fullName evidence="1">Non-homologous end joining protein Ku</fullName>
    </recommendedName>
</protein>
<dbReference type="EMBL" id="AP006840">
    <property type="protein sequence ID" value="BAD40783.1"/>
    <property type="molecule type" value="Genomic_DNA"/>
</dbReference>
<dbReference type="RefSeq" id="WP_011195926.1">
    <property type="nucleotide sequence ID" value="NC_006177.1"/>
</dbReference>
<dbReference type="STRING" id="292459.STH1798"/>
<dbReference type="KEGG" id="sth:STH1798"/>
<dbReference type="eggNOG" id="COG1273">
    <property type="taxonomic scope" value="Bacteria"/>
</dbReference>
<dbReference type="HOGENOM" id="CLU_048975_2_0_9"/>
<dbReference type="Proteomes" id="UP000000417">
    <property type="component" value="Chromosome"/>
</dbReference>
<dbReference type="GO" id="GO:0003690">
    <property type="term" value="F:double-stranded DNA binding"/>
    <property type="evidence" value="ECO:0007669"/>
    <property type="project" value="UniProtKB-UniRule"/>
</dbReference>
<dbReference type="GO" id="GO:0006310">
    <property type="term" value="P:DNA recombination"/>
    <property type="evidence" value="ECO:0007669"/>
    <property type="project" value="UniProtKB-KW"/>
</dbReference>
<dbReference type="GO" id="GO:0006303">
    <property type="term" value="P:double-strand break repair via nonhomologous end joining"/>
    <property type="evidence" value="ECO:0007669"/>
    <property type="project" value="UniProtKB-UniRule"/>
</dbReference>
<dbReference type="CDD" id="cd00789">
    <property type="entry name" value="KU_like"/>
    <property type="match status" value="1"/>
</dbReference>
<dbReference type="FunFam" id="2.40.290.10:FF:000004">
    <property type="entry name" value="Non-homologous end joining protein Ku"/>
    <property type="match status" value="1"/>
</dbReference>
<dbReference type="Gene3D" id="2.40.290.10">
    <property type="match status" value="1"/>
</dbReference>
<dbReference type="HAMAP" id="MF_01875">
    <property type="entry name" value="Prokaryotic_Ku"/>
    <property type="match status" value="1"/>
</dbReference>
<dbReference type="InterPro" id="IPR006164">
    <property type="entry name" value="Ku70/Ku80_beta-barrel_dom"/>
</dbReference>
<dbReference type="InterPro" id="IPR009187">
    <property type="entry name" value="Prok_Ku"/>
</dbReference>
<dbReference type="InterPro" id="IPR016194">
    <property type="entry name" value="SPOC-like_C_dom_sf"/>
</dbReference>
<dbReference type="NCBIfam" id="TIGR02772">
    <property type="entry name" value="Ku_bact"/>
    <property type="match status" value="1"/>
</dbReference>
<dbReference type="PANTHER" id="PTHR41251">
    <property type="entry name" value="NON-HOMOLOGOUS END JOINING PROTEIN KU"/>
    <property type="match status" value="1"/>
</dbReference>
<dbReference type="PANTHER" id="PTHR41251:SF1">
    <property type="entry name" value="NON-HOMOLOGOUS END JOINING PROTEIN KU"/>
    <property type="match status" value="1"/>
</dbReference>
<dbReference type="Pfam" id="PF02735">
    <property type="entry name" value="Ku"/>
    <property type="match status" value="1"/>
</dbReference>
<dbReference type="SMART" id="SM00559">
    <property type="entry name" value="Ku78"/>
    <property type="match status" value="1"/>
</dbReference>
<dbReference type="SUPFAM" id="SSF100939">
    <property type="entry name" value="SPOC domain-like"/>
    <property type="match status" value="1"/>
</dbReference>